<protein>
    <recommendedName>
        <fullName evidence="1">Purine ribonucleoside efflux pump NepI</fullName>
    </recommendedName>
</protein>
<proteinExistence type="inferred from homology"/>
<reference key="1">
    <citation type="journal article" date="2009" name="J. Bacteriol.">
        <title>Genomic sequencing reveals regulatory mutations and recombinational events in the widely used MC4100 lineage of Escherichia coli K-12.</title>
        <authorList>
            <person name="Ferenci T."/>
            <person name="Zhou Z."/>
            <person name="Betteridge T."/>
            <person name="Ren Y."/>
            <person name="Liu Y."/>
            <person name="Feng L."/>
            <person name="Reeves P.R."/>
            <person name="Wang L."/>
        </authorList>
    </citation>
    <scope>NUCLEOTIDE SEQUENCE [LARGE SCALE GENOMIC DNA]</scope>
    <source>
        <strain>K12 / MC4100 / BW2952</strain>
    </source>
</reference>
<name>NEPI_ECOBW</name>
<evidence type="ECO:0000255" key="1">
    <source>
        <dbReference type="HAMAP-Rule" id="MF_01189"/>
    </source>
</evidence>
<keyword id="KW-0050">Antiport</keyword>
<keyword id="KW-0997">Cell inner membrane</keyword>
<keyword id="KW-1003">Cell membrane</keyword>
<keyword id="KW-0472">Membrane</keyword>
<keyword id="KW-0812">Transmembrane</keyword>
<keyword id="KW-1133">Transmembrane helix</keyword>
<keyword id="KW-0813">Transport</keyword>
<sequence>MSEFIAENRGADAITRPNWSAVFSVAFCVACLIIVEFLPVSLLTPMAQDLGISEGVAGQSVTVTAFVAMFASLFITQTIQATDRRYVVILFAVLLTLSCLLVSFANSFSLLLIGRACLGLALGGFWAMSASLTMRLVPPRTVPKALSVIFGAVSIALVIAAPLGSFLGELIGWRNVFNAAAVMGVLCIFWIIKSLPSLPGEPSHQKQNTFRLLQRPGVMAGMIAIFMSFAGQFAFFTYIRPVYMNLAGFGVDGLTLVLLSFGIASFIGTSLSSFILKRSVKLALAGAPLILAVSALVLTLWGSDKIVATGVAIIWGLTFALVPVGWSTWITRSLADQAEKAGSIQVAVIQLANTCGAAIGGYALDNIGLTSPLMLSGTLMLLTALLVTAKVKMKKS</sequence>
<comment type="function">
    <text evidence="1">Involved in the efflux of purine ribonucleosides, such as inosine and guanosine.</text>
</comment>
<comment type="catalytic activity">
    <reaction evidence="1">
        <text>inosine(in) + H(+)(out) = inosine(out) + H(+)(in)</text>
        <dbReference type="Rhea" id="RHEA:29211"/>
        <dbReference type="ChEBI" id="CHEBI:15378"/>
        <dbReference type="ChEBI" id="CHEBI:17596"/>
    </reaction>
    <physiologicalReaction direction="left-to-right" evidence="1">
        <dbReference type="Rhea" id="RHEA:29212"/>
    </physiologicalReaction>
</comment>
<comment type="catalytic activity">
    <reaction evidence="1">
        <text>guanosine(in) + H(+)(out) = guanosine(out) + H(+)(in)</text>
        <dbReference type="Rhea" id="RHEA:29583"/>
        <dbReference type="ChEBI" id="CHEBI:15378"/>
        <dbReference type="ChEBI" id="CHEBI:16750"/>
    </reaction>
    <physiologicalReaction direction="left-to-right" evidence="1">
        <dbReference type="Rhea" id="RHEA:29584"/>
    </physiologicalReaction>
</comment>
<comment type="subcellular location">
    <subcellularLocation>
        <location evidence="1">Cell inner membrane</location>
        <topology evidence="1">Multi-pass membrane protein</topology>
    </subcellularLocation>
</comment>
<comment type="similarity">
    <text evidence="1">Belongs to the major facilitator superfamily. DHA1 family. NepI (TC 2.A.1.2.26) subfamily.</text>
</comment>
<feature type="chain" id="PRO_1000213791" description="Purine ribonucleoside efflux pump NepI">
    <location>
        <begin position="1"/>
        <end position="396"/>
    </location>
</feature>
<feature type="topological domain" description="Cytoplasmic" evidence="1">
    <location>
        <begin position="1"/>
        <end position="21"/>
    </location>
</feature>
<feature type="transmembrane region" description="Helical" evidence="1">
    <location>
        <begin position="22"/>
        <end position="42"/>
    </location>
</feature>
<feature type="topological domain" description="Periplasmic" evidence="1">
    <location>
        <begin position="43"/>
        <end position="54"/>
    </location>
</feature>
<feature type="transmembrane region" description="Helical" evidence="1">
    <location>
        <begin position="55"/>
        <end position="75"/>
    </location>
</feature>
<feature type="topological domain" description="Cytoplasmic" evidence="1">
    <location>
        <begin position="76"/>
        <end position="85"/>
    </location>
</feature>
<feature type="transmembrane region" description="Helical" evidence="1">
    <location>
        <begin position="86"/>
        <end position="106"/>
    </location>
</feature>
<feature type="topological domain" description="Periplasmic" evidence="1">
    <location>
        <position position="107"/>
    </location>
</feature>
<feature type="transmembrane region" description="Helical" evidence="1">
    <location>
        <begin position="108"/>
        <end position="128"/>
    </location>
</feature>
<feature type="topological domain" description="Cytoplasmic" evidence="1">
    <location>
        <begin position="129"/>
        <end position="147"/>
    </location>
</feature>
<feature type="transmembrane region" description="Helical" evidence="1">
    <location>
        <begin position="148"/>
        <end position="168"/>
    </location>
</feature>
<feature type="topological domain" description="Periplasmic" evidence="1">
    <location>
        <begin position="169"/>
        <end position="175"/>
    </location>
</feature>
<feature type="transmembrane region" description="Helical" evidence="1">
    <location>
        <begin position="176"/>
        <end position="196"/>
    </location>
</feature>
<feature type="topological domain" description="Cytoplasmic" evidence="1">
    <location>
        <begin position="197"/>
        <end position="215"/>
    </location>
</feature>
<feature type="transmembrane region" description="Helical" evidence="1">
    <location>
        <begin position="216"/>
        <end position="236"/>
    </location>
</feature>
<feature type="topological domain" description="Periplasmic" evidence="1">
    <location>
        <begin position="237"/>
        <end position="255"/>
    </location>
</feature>
<feature type="transmembrane region" description="Helical" evidence="1">
    <location>
        <begin position="256"/>
        <end position="276"/>
    </location>
</feature>
<feature type="topological domain" description="Cytoplasmic" evidence="1">
    <location>
        <begin position="277"/>
        <end position="281"/>
    </location>
</feature>
<feature type="transmembrane region" description="Helical" evidence="1">
    <location>
        <begin position="282"/>
        <end position="302"/>
    </location>
</feature>
<feature type="topological domain" description="Periplasmic" evidence="1">
    <location>
        <begin position="303"/>
        <end position="305"/>
    </location>
</feature>
<feature type="transmembrane region" description="Helical" evidence="1">
    <location>
        <begin position="306"/>
        <end position="326"/>
    </location>
</feature>
<feature type="topological domain" description="Cytoplasmic" evidence="1">
    <location>
        <begin position="327"/>
        <end position="343"/>
    </location>
</feature>
<feature type="transmembrane region" description="Helical" evidence="1">
    <location>
        <begin position="344"/>
        <end position="364"/>
    </location>
</feature>
<feature type="topological domain" description="Periplasmic" evidence="1">
    <location>
        <begin position="365"/>
        <end position="366"/>
    </location>
</feature>
<feature type="transmembrane region" description="Helical" evidence="1">
    <location>
        <begin position="367"/>
        <end position="387"/>
    </location>
</feature>
<feature type="topological domain" description="Cytoplasmic" evidence="1">
    <location>
        <begin position="388"/>
        <end position="396"/>
    </location>
</feature>
<dbReference type="EMBL" id="CP001396">
    <property type="protein sequence ID" value="ACR65178.1"/>
    <property type="molecule type" value="Genomic_DNA"/>
</dbReference>
<dbReference type="RefSeq" id="WP_001288549.1">
    <property type="nucleotide sequence ID" value="NC_012759.1"/>
</dbReference>
<dbReference type="SMR" id="C4ZXQ4"/>
<dbReference type="GeneID" id="75205376"/>
<dbReference type="KEGG" id="ebw:BWG_3353"/>
<dbReference type="HOGENOM" id="CLU_001265_61_1_6"/>
<dbReference type="GO" id="GO:0005886">
    <property type="term" value="C:plasma membrane"/>
    <property type="evidence" value="ECO:0007669"/>
    <property type="project" value="UniProtKB-SubCell"/>
</dbReference>
<dbReference type="GO" id="GO:0015297">
    <property type="term" value="F:antiporter activity"/>
    <property type="evidence" value="ECO:0007669"/>
    <property type="project" value="UniProtKB-KW"/>
</dbReference>
<dbReference type="GO" id="GO:0015211">
    <property type="term" value="F:purine nucleoside transmembrane transporter activity"/>
    <property type="evidence" value="ECO:0007669"/>
    <property type="project" value="UniProtKB-UniRule"/>
</dbReference>
<dbReference type="CDD" id="cd17324">
    <property type="entry name" value="MFS_NepI_like"/>
    <property type="match status" value="1"/>
</dbReference>
<dbReference type="FunFam" id="1.20.1250.20:FF:000113">
    <property type="entry name" value="Purine ribonucleoside efflux pump NepI"/>
    <property type="match status" value="1"/>
</dbReference>
<dbReference type="Gene3D" id="1.20.1250.20">
    <property type="entry name" value="MFS general substrate transporter like domains"/>
    <property type="match status" value="1"/>
</dbReference>
<dbReference type="HAMAP" id="MF_01189">
    <property type="entry name" value="MFS_NepI"/>
    <property type="match status" value="1"/>
</dbReference>
<dbReference type="InterPro" id="IPR011701">
    <property type="entry name" value="MFS"/>
</dbReference>
<dbReference type="InterPro" id="IPR020846">
    <property type="entry name" value="MFS_dom"/>
</dbReference>
<dbReference type="InterPro" id="IPR050189">
    <property type="entry name" value="MFS_Efflux_Transporters"/>
</dbReference>
<dbReference type="InterPro" id="IPR023680">
    <property type="entry name" value="MFS_NepI"/>
</dbReference>
<dbReference type="InterPro" id="IPR036259">
    <property type="entry name" value="MFS_trans_sf"/>
</dbReference>
<dbReference type="NCBIfam" id="NF007578">
    <property type="entry name" value="PRK10213.1"/>
    <property type="match status" value="1"/>
</dbReference>
<dbReference type="PANTHER" id="PTHR43124">
    <property type="entry name" value="PURINE EFFLUX PUMP PBUE"/>
    <property type="match status" value="1"/>
</dbReference>
<dbReference type="PANTHER" id="PTHR43124:SF5">
    <property type="entry name" value="PURINE RIBONUCLEOSIDE EFFLUX PUMP NEPI"/>
    <property type="match status" value="1"/>
</dbReference>
<dbReference type="Pfam" id="PF07690">
    <property type="entry name" value="MFS_1"/>
    <property type="match status" value="1"/>
</dbReference>
<dbReference type="SUPFAM" id="SSF103473">
    <property type="entry name" value="MFS general substrate transporter"/>
    <property type="match status" value="1"/>
</dbReference>
<dbReference type="PROSITE" id="PS50850">
    <property type="entry name" value="MFS"/>
    <property type="match status" value="1"/>
</dbReference>
<organism>
    <name type="scientific">Escherichia coli (strain K12 / MC4100 / BW2952)</name>
    <dbReference type="NCBI Taxonomy" id="595496"/>
    <lineage>
        <taxon>Bacteria</taxon>
        <taxon>Pseudomonadati</taxon>
        <taxon>Pseudomonadota</taxon>
        <taxon>Gammaproteobacteria</taxon>
        <taxon>Enterobacterales</taxon>
        <taxon>Enterobacteriaceae</taxon>
        <taxon>Escherichia</taxon>
    </lineage>
</organism>
<accession>C4ZXQ4</accession>
<gene>
    <name evidence="1" type="primary">nepI</name>
    <name type="ordered locus">BWG_3353</name>
</gene>